<comment type="similarity">
    <text evidence="1">Belongs to the bacterial ribosomal protein bS16 family.</text>
</comment>
<feature type="chain" id="PRO_1000049379" description="Small ribosomal subunit protein bS16">
    <location>
        <begin position="1"/>
        <end position="82"/>
    </location>
</feature>
<dbReference type="EMBL" id="CP000305">
    <property type="protein sequence ID" value="ABG17135.1"/>
    <property type="molecule type" value="Genomic_DNA"/>
</dbReference>
<dbReference type="EMBL" id="ACNQ01000007">
    <property type="protein sequence ID" value="EEO78001.1"/>
    <property type="molecule type" value="Genomic_DNA"/>
</dbReference>
<dbReference type="RefSeq" id="WP_002209458.1">
    <property type="nucleotide sequence ID" value="NZ_ACNQ01000007.1"/>
</dbReference>
<dbReference type="SMR" id="Q1CLJ5"/>
<dbReference type="GeneID" id="96664341"/>
<dbReference type="KEGG" id="ypn:YPN_0803"/>
<dbReference type="HOGENOM" id="CLU_100590_5_1_6"/>
<dbReference type="Proteomes" id="UP000008936">
    <property type="component" value="Chromosome"/>
</dbReference>
<dbReference type="GO" id="GO:0005737">
    <property type="term" value="C:cytoplasm"/>
    <property type="evidence" value="ECO:0007669"/>
    <property type="project" value="UniProtKB-ARBA"/>
</dbReference>
<dbReference type="GO" id="GO:0015935">
    <property type="term" value="C:small ribosomal subunit"/>
    <property type="evidence" value="ECO:0007669"/>
    <property type="project" value="TreeGrafter"/>
</dbReference>
<dbReference type="GO" id="GO:0003735">
    <property type="term" value="F:structural constituent of ribosome"/>
    <property type="evidence" value="ECO:0007669"/>
    <property type="project" value="InterPro"/>
</dbReference>
<dbReference type="GO" id="GO:0006412">
    <property type="term" value="P:translation"/>
    <property type="evidence" value="ECO:0007669"/>
    <property type="project" value="UniProtKB-UniRule"/>
</dbReference>
<dbReference type="FunFam" id="3.30.1320.10:FF:000001">
    <property type="entry name" value="30S ribosomal protein S16"/>
    <property type="match status" value="1"/>
</dbReference>
<dbReference type="Gene3D" id="3.30.1320.10">
    <property type="match status" value="1"/>
</dbReference>
<dbReference type="HAMAP" id="MF_00385">
    <property type="entry name" value="Ribosomal_bS16"/>
    <property type="match status" value="1"/>
</dbReference>
<dbReference type="InterPro" id="IPR000307">
    <property type="entry name" value="Ribosomal_bS16"/>
</dbReference>
<dbReference type="InterPro" id="IPR020592">
    <property type="entry name" value="Ribosomal_bS16_CS"/>
</dbReference>
<dbReference type="InterPro" id="IPR023803">
    <property type="entry name" value="Ribosomal_bS16_dom_sf"/>
</dbReference>
<dbReference type="NCBIfam" id="TIGR00002">
    <property type="entry name" value="S16"/>
    <property type="match status" value="1"/>
</dbReference>
<dbReference type="PANTHER" id="PTHR12919">
    <property type="entry name" value="30S RIBOSOMAL PROTEIN S16"/>
    <property type="match status" value="1"/>
</dbReference>
<dbReference type="PANTHER" id="PTHR12919:SF20">
    <property type="entry name" value="SMALL RIBOSOMAL SUBUNIT PROTEIN BS16M"/>
    <property type="match status" value="1"/>
</dbReference>
<dbReference type="Pfam" id="PF00886">
    <property type="entry name" value="Ribosomal_S16"/>
    <property type="match status" value="1"/>
</dbReference>
<dbReference type="SUPFAM" id="SSF54565">
    <property type="entry name" value="Ribosomal protein S16"/>
    <property type="match status" value="1"/>
</dbReference>
<dbReference type="PROSITE" id="PS00732">
    <property type="entry name" value="RIBOSOMAL_S16"/>
    <property type="match status" value="1"/>
</dbReference>
<proteinExistence type="inferred from homology"/>
<gene>
    <name evidence="1" type="primary">rpsP</name>
    <name type="ordered locus">YPN_0803</name>
    <name type="ORF">YP516_0860</name>
</gene>
<accession>Q1CLJ5</accession>
<accession>C4GPZ5</accession>
<organism>
    <name type="scientific">Yersinia pestis bv. Antiqua (strain Nepal516)</name>
    <dbReference type="NCBI Taxonomy" id="377628"/>
    <lineage>
        <taxon>Bacteria</taxon>
        <taxon>Pseudomonadati</taxon>
        <taxon>Pseudomonadota</taxon>
        <taxon>Gammaproteobacteria</taxon>
        <taxon>Enterobacterales</taxon>
        <taxon>Yersiniaceae</taxon>
        <taxon>Yersinia</taxon>
    </lineage>
</organism>
<sequence length="82" mass="9097">MVTIRLARGGAKKRPFYQVVVTDSRNARDGRFIERVGFFNPIASGQAEALRLDLDRIEHWIGLGATVSDRVSVLIKDAKKAA</sequence>
<keyword id="KW-0687">Ribonucleoprotein</keyword>
<keyword id="KW-0689">Ribosomal protein</keyword>
<reference key="1">
    <citation type="journal article" date="2006" name="J. Bacteriol.">
        <title>Complete genome sequence of Yersinia pestis strains Antiqua and Nepal516: evidence of gene reduction in an emerging pathogen.</title>
        <authorList>
            <person name="Chain P.S.G."/>
            <person name="Hu P."/>
            <person name="Malfatti S.A."/>
            <person name="Radnedge L."/>
            <person name="Larimer F."/>
            <person name="Vergez L.M."/>
            <person name="Worsham P."/>
            <person name="Chu M.C."/>
            <person name="Andersen G.L."/>
        </authorList>
    </citation>
    <scope>NUCLEOTIDE SEQUENCE [LARGE SCALE GENOMIC DNA]</scope>
    <source>
        <strain>Nepal516</strain>
    </source>
</reference>
<reference key="2">
    <citation type="submission" date="2009-04" db="EMBL/GenBank/DDBJ databases">
        <title>Yersinia pestis Nepal516A whole genome shotgun sequencing project.</title>
        <authorList>
            <person name="Plunkett G. III"/>
            <person name="Anderson B.D."/>
            <person name="Baumler D.J."/>
            <person name="Burland V."/>
            <person name="Cabot E.L."/>
            <person name="Glasner J.D."/>
            <person name="Mau B."/>
            <person name="Neeno-Eckwall E."/>
            <person name="Perna N.T."/>
            <person name="Munk A.C."/>
            <person name="Tapia R."/>
            <person name="Green L.D."/>
            <person name="Rogers Y.C."/>
            <person name="Detter J.C."/>
            <person name="Bruce D.C."/>
            <person name="Brettin T.S."/>
        </authorList>
    </citation>
    <scope>NUCLEOTIDE SEQUENCE [LARGE SCALE GENOMIC DNA]</scope>
    <source>
        <strain>Nepal516</strain>
    </source>
</reference>
<protein>
    <recommendedName>
        <fullName evidence="1">Small ribosomal subunit protein bS16</fullName>
    </recommendedName>
    <alternativeName>
        <fullName evidence="2">30S ribosomal protein S16</fullName>
    </alternativeName>
</protein>
<name>RS16_YERPN</name>
<evidence type="ECO:0000255" key="1">
    <source>
        <dbReference type="HAMAP-Rule" id="MF_00385"/>
    </source>
</evidence>
<evidence type="ECO:0000305" key="2"/>